<name>MSHA_KRIFD</name>
<protein>
    <recommendedName>
        <fullName>D-inositol 3-phosphate glycosyltransferase</fullName>
        <ecNumber evidence="1">2.4.1.250</ecNumber>
    </recommendedName>
    <alternativeName>
        <fullName evidence="1">N-acetylglucosamine-inositol-phosphate N-acetylglucosaminyltransferase</fullName>
        <shortName evidence="1">GlcNAc-Ins-P N-acetylglucosaminyltransferase</shortName>
    </alternativeName>
</protein>
<organism>
    <name type="scientific">Kribbella flavida (strain DSM 17836 / JCM 10339 / NBRC 14399)</name>
    <dbReference type="NCBI Taxonomy" id="479435"/>
    <lineage>
        <taxon>Bacteria</taxon>
        <taxon>Bacillati</taxon>
        <taxon>Actinomycetota</taxon>
        <taxon>Actinomycetes</taxon>
        <taxon>Propionibacteriales</taxon>
        <taxon>Kribbellaceae</taxon>
        <taxon>Kribbella</taxon>
    </lineage>
</organism>
<feature type="chain" id="PRO_0000400129" description="D-inositol 3-phosphate glycosyltransferase">
    <location>
        <begin position="1"/>
        <end position="424"/>
    </location>
</feature>
<feature type="binding site" evidence="1">
    <location>
        <position position="20"/>
    </location>
    <ligand>
        <name>1D-myo-inositol 3-phosphate</name>
        <dbReference type="ChEBI" id="CHEBI:58401"/>
    </ligand>
</feature>
<feature type="binding site" evidence="1">
    <location>
        <begin position="26"/>
        <end position="27"/>
    </location>
    <ligand>
        <name>UDP-N-acetyl-alpha-D-glucosamine</name>
        <dbReference type="ChEBI" id="CHEBI:57705"/>
    </ligand>
</feature>
<feature type="binding site" evidence="1">
    <location>
        <begin position="31"/>
        <end position="36"/>
    </location>
    <ligand>
        <name>1D-myo-inositol 3-phosphate</name>
        <dbReference type="ChEBI" id="CHEBI:58401"/>
    </ligand>
</feature>
<feature type="binding site" evidence="1">
    <location>
        <position position="34"/>
    </location>
    <ligand>
        <name>UDP-N-acetyl-alpha-D-glucosamine</name>
        <dbReference type="ChEBI" id="CHEBI:57705"/>
    </ligand>
</feature>
<feature type="binding site" evidence="1">
    <location>
        <position position="89"/>
    </location>
    <ligand>
        <name>1D-myo-inositol 3-phosphate</name>
        <dbReference type="ChEBI" id="CHEBI:58401"/>
    </ligand>
</feature>
<feature type="binding site" evidence="1">
    <location>
        <position position="122"/>
    </location>
    <ligand>
        <name>1D-myo-inositol 3-phosphate</name>
        <dbReference type="ChEBI" id="CHEBI:58401"/>
    </ligand>
</feature>
<feature type="binding site" evidence="1">
    <location>
        <position position="146"/>
    </location>
    <ligand>
        <name>1D-myo-inositol 3-phosphate</name>
        <dbReference type="ChEBI" id="CHEBI:58401"/>
    </ligand>
</feature>
<feature type="binding site" evidence="1">
    <location>
        <position position="166"/>
    </location>
    <ligand>
        <name>1D-myo-inositol 3-phosphate</name>
        <dbReference type="ChEBI" id="CHEBI:58401"/>
    </ligand>
</feature>
<feature type="binding site" evidence="1">
    <location>
        <position position="240"/>
    </location>
    <ligand>
        <name>UDP-N-acetyl-alpha-D-glucosamine</name>
        <dbReference type="ChEBI" id="CHEBI:57705"/>
    </ligand>
</feature>
<feature type="binding site" evidence="1">
    <location>
        <position position="245"/>
    </location>
    <ligand>
        <name>UDP-N-acetyl-alpha-D-glucosamine</name>
        <dbReference type="ChEBI" id="CHEBI:57705"/>
    </ligand>
</feature>
<feature type="binding site" evidence="1">
    <location>
        <position position="306"/>
    </location>
    <ligand>
        <name>UDP-N-acetyl-alpha-D-glucosamine</name>
        <dbReference type="ChEBI" id="CHEBI:57705"/>
    </ligand>
</feature>
<feature type="binding site" evidence="1">
    <location>
        <position position="315"/>
    </location>
    <ligand>
        <name>Mg(2+)</name>
        <dbReference type="ChEBI" id="CHEBI:18420"/>
    </ligand>
</feature>
<feature type="binding site" evidence="1">
    <location>
        <position position="316"/>
    </location>
    <ligand>
        <name>Mg(2+)</name>
        <dbReference type="ChEBI" id="CHEBI:18420"/>
    </ligand>
</feature>
<feature type="binding site" evidence="1">
    <location>
        <position position="318"/>
    </location>
    <ligand>
        <name>Mg(2+)</name>
        <dbReference type="ChEBI" id="CHEBI:18420"/>
    </ligand>
</feature>
<feature type="binding site" evidence="1">
    <location>
        <position position="328"/>
    </location>
    <ligand>
        <name>UDP-N-acetyl-alpha-D-glucosamine</name>
        <dbReference type="ChEBI" id="CHEBI:57705"/>
    </ligand>
</feature>
<feature type="binding site" evidence="1">
    <location>
        <position position="336"/>
    </location>
    <ligand>
        <name>UDP-N-acetyl-alpha-D-glucosamine</name>
        <dbReference type="ChEBI" id="CHEBI:57705"/>
    </ligand>
</feature>
<feature type="binding site" evidence="1">
    <location>
        <position position="342"/>
    </location>
    <ligand>
        <name>Mg(2+)</name>
        <dbReference type="ChEBI" id="CHEBI:18420"/>
    </ligand>
</feature>
<reference key="1">
    <citation type="submission" date="2009-09" db="EMBL/GenBank/DDBJ databases">
        <title>The complete genome of Kribbella flavida DSM 17836.</title>
        <authorList>
            <consortium name="US DOE Joint Genome Institute (JGI-PGF)"/>
            <person name="Lucas S."/>
            <person name="Copeland A."/>
            <person name="Lapidus A."/>
            <person name="Glavina del Rio T."/>
            <person name="Dalin E."/>
            <person name="Tice H."/>
            <person name="Bruce D."/>
            <person name="Goodwin L."/>
            <person name="Pitluck S."/>
            <person name="Kyrpides N."/>
            <person name="Mavromatis K."/>
            <person name="Ivanova N."/>
            <person name="Saunders E."/>
            <person name="Brettin T."/>
            <person name="Detter J.C."/>
            <person name="Han C."/>
            <person name="Larimer F."/>
            <person name="Land M."/>
            <person name="Hauser L."/>
            <person name="Markowitz V."/>
            <person name="Cheng J.-F."/>
            <person name="Hugenholtz P."/>
            <person name="Woyke T."/>
            <person name="Wu D."/>
            <person name="Pukall R."/>
            <person name="Klenk H.-P."/>
            <person name="Eisen J.A."/>
        </authorList>
    </citation>
    <scope>NUCLEOTIDE SEQUENCE [LARGE SCALE GENOMIC DNA]</scope>
    <source>
        <strain>DSM 17836 / JCM 10339 / NBRC 14399</strain>
    </source>
</reference>
<gene>
    <name evidence="1" type="primary">mshA</name>
    <name type="ordered locus">Kfla_1007</name>
</gene>
<evidence type="ECO:0000255" key="1">
    <source>
        <dbReference type="HAMAP-Rule" id="MF_01695"/>
    </source>
</evidence>
<keyword id="KW-0328">Glycosyltransferase</keyword>
<keyword id="KW-0460">Magnesium</keyword>
<keyword id="KW-0479">Metal-binding</keyword>
<keyword id="KW-1185">Reference proteome</keyword>
<keyword id="KW-0808">Transferase</keyword>
<accession>D2Q1C4</accession>
<dbReference type="EC" id="2.4.1.250" evidence="1"/>
<dbReference type="EMBL" id="CP001736">
    <property type="protein sequence ID" value="ADB30112.1"/>
    <property type="molecule type" value="Genomic_DNA"/>
</dbReference>
<dbReference type="RefSeq" id="WP_012918668.1">
    <property type="nucleotide sequence ID" value="NC_013729.1"/>
</dbReference>
<dbReference type="SMR" id="D2Q1C4"/>
<dbReference type="STRING" id="479435.Kfla_1007"/>
<dbReference type="CAZy" id="GT4">
    <property type="family name" value="Glycosyltransferase Family 4"/>
</dbReference>
<dbReference type="KEGG" id="kfl:Kfla_1007"/>
<dbReference type="eggNOG" id="COG0438">
    <property type="taxonomic scope" value="Bacteria"/>
</dbReference>
<dbReference type="HOGENOM" id="CLU_009583_2_3_11"/>
<dbReference type="OrthoDB" id="9810929at2"/>
<dbReference type="Proteomes" id="UP000007967">
    <property type="component" value="Chromosome"/>
</dbReference>
<dbReference type="GO" id="GO:0008375">
    <property type="term" value="F:acetylglucosaminyltransferase activity"/>
    <property type="evidence" value="ECO:0007669"/>
    <property type="project" value="UniProtKB-UniRule"/>
</dbReference>
<dbReference type="GO" id="GO:0102710">
    <property type="term" value="F:D-inositol-3-phosphate glycosyltransferase activity"/>
    <property type="evidence" value="ECO:0007669"/>
    <property type="project" value="UniProtKB-EC"/>
</dbReference>
<dbReference type="GO" id="GO:0000287">
    <property type="term" value="F:magnesium ion binding"/>
    <property type="evidence" value="ECO:0007669"/>
    <property type="project" value="UniProtKB-UniRule"/>
</dbReference>
<dbReference type="GO" id="GO:0010125">
    <property type="term" value="P:mycothiol biosynthetic process"/>
    <property type="evidence" value="ECO:0007669"/>
    <property type="project" value="UniProtKB-UniRule"/>
</dbReference>
<dbReference type="CDD" id="cd03800">
    <property type="entry name" value="GT4_sucrose_synthase"/>
    <property type="match status" value="1"/>
</dbReference>
<dbReference type="Gene3D" id="3.40.50.2000">
    <property type="entry name" value="Glycogen Phosphorylase B"/>
    <property type="match status" value="2"/>
</dbReference>
<dbReference type="HAMAP" id="MF_01695">
    <property type="entry name" value="MshA"/>
    <property type="match status" value="1"/>
</dbReference>
<dbReference type="InterPro" id="IPR001296">
    <property type="entry name" value="Glyco_trans_1"/>
</dbReference>
<dbReference type="InterPro" id="IPR028098">
    <property type="entry name" value="Glyco_trans_4-like_N"/>
</dbReference>
<dbReference type="InterPro" id="IPR050194">
    <property type="entry name" value="Glycosyltransferase_grp1"/>
</dbReference>
<dbReference type="InterPro" id="IPR017814">
    <property type="entry name" value="Mycothiol_biosynthesis_MshA"/>
</dbReference>
<dbReference type="NCBIfam" id="TIGR03449">
    <property type="entry name" value="mycothiol_MshA"/>
    <property type="match status" value="1"/>
</dbReference>
<dbReference type="PANTHER" id="PTHR45947">
    <property type="entry name" value="SULFOQUINOVOSYL TRANSFERASE SQD2"/>
    <property type="match status" value="1"/>
</dbReference>
<dbReference type="PANTHER" id="PTHR45947:SF3">
    <property type="entry name" value="SULFOQUINOVOSYL TRANSFERASE SQD2"/>
    <property type="match status" value="1"/>
</dbReference>
<dbReference type="Pfam" id="PF13579">
    <property type="entry name" value="Glyco_trans_4_4"/>
    <property type="match status" value="1"/>
</dbReference>
<dbReference type="Pfam" id="PF00534">
    <property type="entry name" value="Glycos_transf_1"/>
    <property type="match status" value="1"/>
</dbReference>
<dbReference type="SUPFAM" id="SSF53756">
    <property type="entry name" value="UDP-Glycosyltransferase/glycogen phosphorylase"/>
    <property type="match status" value="1"/>
</dbReference>
<sequence>MTEPPAVDRPLRRVAMISLHTSPLDQPGTGDAGGMNVYVVELSRRLADLGIAVDIFTRATSSALPAKVELVPGVTVRNVAAGPYEGLSKNELPAQLCTFARAVLRAEAIREPGYYDVIHSHYWLSGQVGLLARDRWAVPLVHTMHTMAKVKNASLADDDVPEPPARLLGEEQVVEAADRLLANTDEEAHELVTLYGAQPAKVEVVNPGVDLEVFAPGDQAAARRAVGVREDAIVLAFVGRIQPLKAPDLLIRAAARMLERQPELRDRLVVAVIGGPSGNGMEHPEAHAELARRLGVDDVTRFVKPMPRPGLADWYRAASVVCVPSYSESFGLVALEAQACGTPVVAAAVGGLTTAVTDGVTGLLVPGHGVDDFADALAAIATDPGTRETMGKAAVEHAQGFGWELTAQTTLAAYRTATETMAAE</sequence>
<comment type="function">
    <text evidence="1">Catalyzes the transfer of a N-acetyl-glucosamine moiety to 1D-myo-inositol 3-phosphate to produce 1D-myo-inositol 2-acetamido-2-deoxy-glucopyranoside 3-phosphate in the mycothiol biosynthesis pathway.</text>
</comment>
<comment type="catalytic activity">
    <reaction evidence="1">
        <text>1D-myo-inositol 3-phosphate + UDP-N-acetyl-alpha-D-glucosamine = 1D-myo-inositol 2-acetamido-2-deoxy-alpha-D-glucopyranoside 3-phosphate + UDP + H(+)</text>
        <dbReference type="Rhea" id="RHEA:26188"/>
        <dbReference type="ChEBI" id="CHEBI:15378"/>
        <dbReference type="ChEBI" id="CHEBI:57705"/>
        <dbReference type="ChEBI" id="CHEBI:58223"/>
        <dbReference type="ChEBI" id="CHEBI:58401"/>
        <dbReference type="ChEBI" id="CHEBI:58892"/>
        <dbReference type="EC" id="2.4.1.250"/>
    </reaction>
</comment>
<comment type="subunit">
    <text evidence="1">Homodimer.</text>
</comment>
<comment type="similarity">
    <text evidence="1">Belongs to the glycosyltransferase group 1 family. MshA subfamily.</text>
</comment>
<proteinExistence type="inferred from homology"/>